<protein>
    <recommendedName>
        <fullName>WD repeat domain phosphoinositide-interacting protein 3</fullName>
        <shortName>WIPI-3</shortName>
    </recommendedName>
    <alternativeName>
        <fullName>WD repeat-containing protein 45-like</fullName>
        <shortName>WDR45-like protein</shortName>
    </alternativeName>
    <alternativeName>
        <fullName>WD repeat-containing protein 45B</fullName>
    </alternativeName>
</protein>
<name>WIPI3_XENLA</name>
<feature type="chain" id="PRO_0000051450" description="WD repeat domain phosphoinositide-interacting protein 3">
    <location>
        <begin position="1"/>
        <end position="344"/>
    </location>
</feature>
<feature type="repeat" description="WD 1">
    <location>
        <begin position="183"/>
        <end position="223"/>
    </location>
</feature>
<feature type="repeat" description="WD 2">
    <location>
        <begin position="228"/>
        <end position="267"/>
    </location>
</feature>
<feature type="short sequence motif" description="L/FRRG motif" evidence="2">
    <location>
        <begin position="224"/>
        <end position="227"/>
    </location>
</feature>
<gene>
    <name type="primary">wdr45b</name>
    <name type="synonym">wdr45l</name>
    <name type="synonym">wipi3</name>
</gene>
<dbReference type="EMBL" id="BC080000">
    <property type="protein sequence ID" value="AAH80000.1"/>
    <property type="molecule type" value="mRNA"/>
</dbReference>
<dbReference type="RefSeq" id="NP_001087486.1">
    <property type="nucleotide sequence ID" value="NM_001094017.1"/>
</dbReference>
<dbReference type="SMR" id="Q68F45"/>
<dbReference type="DNASU" id="447310"/>
<dbReference type="GeneID" id="447310"/>
<dbReference type="KEGG" id="xla:447310"/>
<dbReference type="AGR" id="Xenbase:XB-GENE-6254013"/>
<dbReference type="CTD" id="447310"/>
<dbReference type="Xenbase" id="XB-GENE-6254013">
    <property type="gene designation" value="wdr45b.S"/>
</dbReference>
<dbReference type="OMA" id="GGPQCMC"/>
<dbReference type="OrthoDB" id="1667587at2759"/>
<dbReference type="Proteomes" id="UP000186698">
    <property type="component" value="Chromosome 9_10S"/>
</dbReference>
<dbReference type="Bgee" id="447310">
    <property type="expression patterns" value="Expressed in egg cell and 19 other cell types or tissues"/>
</dbReference>
<dbReference type="GO" id="GO:0005829">
    <property type="term" value="C:cytosol"/>
    <property type="evidence" value="ECO:0000318"/>
    <property type="project" value="GO_Central"/>
</dbReference>
<dbReference type="GO" id="GO:0005764">
    <property type="term" value="C:lysosome"/>
    <property type="evidence" value="ECO:0000250"/>
    <property type="project" value="UniProtKB"/>
</dbReference>
<dbReference type="GO" id="GO:0000407">
    <property type="term" value="C:phagophore assembly site"/>
    <property type="evidence" value="ECO:0000250"/>
    <property type="project" value="UniProtKB"/>
</dbReference>
<dbReference type="GO" id="GO:0034045">
    <property type="term" value="C:phagophore assembly site membrane"/>
    <property type="evidence" value="ECO:0000318"/>
    <property type="project" value="GO_Central"/>
</dbReference>
<dbReference type="GO" id="GO:0080025">
    <property type="term" value="F:phosphatidylinositol-3,5-bisphosphate binding"/>
    <property type="evidence" value="ECO:0000250"/>
    <property type="project" value="UniProtKB"/>
</dbReference>
<dbReference type="GO" id="GO:0032266">
    <property type="term" value="F:phosphatidylinositol-3-phosphate binding"/>
    <property type="evidence" value="ECO:0000250"/>
    <property type="project" value="UniProtKB"/>
</dbReference>
<dbReference type="GO" id="GO:0030674">
    <property type="term" value="F:protein-macromolecule adaptor activity"/>
    <property type="evidence" value="ECO:0000318"/>
    <property type="project" value="GO_Central"/>
</dbReference>
<dbReference type="GO" id="GO:0000045">
    <property type="term" value="P:autophagosome assembly"/>
    <property type="evidence" value="ECO:0000250"/>
    <property type="project" value="UniProtKB"/>
</dbReference>
<dbReference type="GO" id="GO:0000422">
    <property type="term" value="P:autophagy of mitochondrion"/>
    <property type="evidence" value="ECO:0000318"/>
    <property type="project" value="GO_Central"/>
</dbReference>
<dbReference type="GO" id="GO:0009267">
    <property type="term" value="P:cellular response to starvation"/>
    <property type="evidence" value="ECO:0000250"/>
    <property type="project" value="UniProtKB"/>
</dbReference>
<dbReference type="GO" id="GO:0061723">
    <property type="term" value="P:glycophagy"/>
    <property type="evidence" value="ECO:0000318"/>
    <property type="project" value="GO_Central"/>
</dbReference>
<dbReference type="GO" id="GO:0044804">
    <property type="term" value="P:nucleophagy"/>
    <property type="evidence" value="ECO:0000318"/>
    <property type="project" value="GO_Central"/>
</dbReference>
<dbReference type="GO" id="GO:0000425">
    <property type="term" value="P:pexophagy"/>
    <property type="evidence" value="ECO:0000318"/>
    <property type="project" value="GO_Central"/>
</dbReference>
<dbReference type="GO" id="GO:0034497">
    <property type="term" value="P:protein localization to phagophore assembly site"/>
    <property type="evidence" value="ECO:0000318"/>
    <property type="project" value="GO_Central"/>
</dbReference>
<dbReference type="FunFam" id="2.130.10.10:FF:000083">
    <property type="entry name" value="WD repeat domain phosphoinositide-interacting protein 3"/>
    <property type="match status" value="1"/>
</dbReference>
<dbReference type="Gene3D" id="2.130.10.10">
    <property type="entry name" value="YVTN repeat-like/Quinoprotein amine dehydrogenase"/>
    <property type="match status" value="1"/>
</dbReference>
<dbReference type="InterPro" id="IPR048720">
    <property type="entry name" value="PROPPIN"/>
</dbReference>
<dbReference type="InterPro" id="IPR015943">
    <property type="entry name" value="WD40/YVTN_repeat-like_dom_sf"/>
</dbReference>
<dbReference type="InterPro" id="IPR036322">
    <property type="entry name" value="WD40_repeat_dom_sf"/>
</dbReference>
<dbReference type="InterPro" id="IPR001680">
    <property type="entry name" value="WD40_rpt"/>
</dbReference>
<dbReference type="PANTHER" id="PTHR11227">
    <property type="entry name" value="WD-REPEAT PROTEIN INTERACTING WITH PHOSPHOINOSIDES WIPI -RELATED"/>
    <property type="match status" value="1"/>
</dbReference>
<dbReference type="Pfam" id="PF21032">
    <property type="entry name" value="PROPPIN"/>
    <property type="match status" value="1"/>
</dbReference>
<dbReference type="SMART" id="SM00320">
    <property type="entry name" value="WD40"/>
    <property type="match status" value="2"/>
</dbReference>
<dbReference type="SUPFAM" id="SSF50978">
    <property type="entry name" value="WD40 repeat-like"/>
    <property type="match status" value="1"/>
</dbReference>
<reference key="1">
    <citation type="submission" date="2004-08" db="EMBL/GenBank/DDBJ databases">
        <authorList>
            <consortium name="NIH - Xenopus Gene Collection (XGC) project"/>
        </authorList>
    </citation>
    <scope>NUCLEOTIDE SEQUENCE [LARGE SCALE MRNA]</scope>
    <source>
        <tissue>Embryo</tissue>
    </source>
</reference>
<proteinExistence type="evidence at transcript level"/>
<organism>
    <name type="scientific">Xenopus laevis</name>
    <name type="common">African clawed frog</name>
    <dbReference type="NCBI Taxonomy" id="8355"/>
    <lineage>
        <taxon>Eukaryota</taxon>
        <taxon>Metazoa</taxon>
        <taxon>Chordata</taxon>
        <taxon>Craniata</taxon>
        <taxon>Vertebrata</taxon>
        <taxon>Euteleostomi</taxon>
        <taxon>Amphibia</taxon>
        <taxon>Batrachia</taxon>
        <taxon>Anura</taxon>
        <taxon>Pipoidea</taxon>
        <taxon>Pipidae</taxon>
        <taxon>Xenopodinae</taxon>
        <taxon>Xenopus</taxon>
        <taxon>Xenopus</taxon>
    </lineage>
</organism>
<accession>Q68F45</accession>
<keyword id="KW-0072">Autophagy</keyword>
<keyword id="KW-0446">Lipid-binding</keyword>
<keyword id="KW-0458">Lysosome</keyword>
<keyword id="KW-1185">Reference proteome</keyword>
<keyword id="KW-0677">Repeat</keyword>
<keyword id="KW-0853">WD repeat</keyword>
<sequence length="344" mass="38182">MNLLPSNPHGNGLLYSGFNQDHGCFACGMENGFRVYNTDPLKEKEKQEFLEGGVSYVEMLFRCNYLALVGGGKKPKYPPNKVMIWDDLKKKTVIEIEFSTEVKAVKLRRDRIVVVLDSMIKVFTFTHNPHQLHVFETCYNPKGLCVLCPNSNNSLLAFPGAHTGHVQIVDLASTEKPPVDIPAHEGILSCIALNLQGTRIATASEKGTLIRIFDTSSGHLIQELRRGSQAANIYCINFNEDASLICVSSDHGTVHIFAAEDPKRNKQSSLASASFLPKYFSSKWSFSKFQVPSGSPCICAFGTEPNSVIAICADGSYYKFQFNPKGECTRDVYAQFLEMTDDKL</sequence>
<comment type="function">
    <text evidence="1">Component of the autophagy machinery that controls the major intracellular degradation process by which cytoplasmic materials are packaged into autophagosomes and delivered to lysosomes for degradation. Binds phosphatidylinositol 3-phosphate (PtdIns3P), and other phosphoinositides including PtdIns(3,5)P2, forming on membranes of the endoplasmic reticulum upon activation of the upstream ULK1 and PI3 kinases and is recruited at phagophore assembly sites where it regulates the elongation of nascent phagophores downstream of WIPI2.</text>
</comment>
<comment type="subcellular location">
    <subcellularLocation>
        <location evidence="1">Preautophagosomal structure</location>
    </subcellularLocation>
    <subcellularLocation>
        <location evidence="1">Lysosome</location>
    </subcellularLocation>
</comment>
<comment type="domain">
    <text evidence="2">The L/FRRG motif is required for recruitment to PtdIns3P.</text>
</comment>
<comment type="similarity">
    <text evidence="3">Belongs to the WD repeat PROPPIN family.</text>
</comment>
<evidence type="ECO:0000250" key="1">
    <source>
        <dbReference type="UniProtKB" id="Q5MNZ6"/>
    </source>
</evidence>
<evidence type="ECO:0000250" key="2">
    <source>
        <dbReference type="UniProtKB" id="Q9Y4P8"/>
    </source>
</evidence>
<evidence type="ECO:0000305" key="3"/>